<feature type="chain" id="PRO_1000195067" description="Dihydroorotate dehydrogenase (quinone)">
    <location>
        <begin position="1"/>
        <end position="377"/>
    </location>
</feature>
<feature type="active site" description="Nucleophile" evidence="1">
    <location>
        <position position="195"/>
    </location>
</feature>
<feature type="binding site" evidence="1">
    <location>
        <begin position="78"/>
        <end position="82"/>
    </location>
    <ligand>
        <name>FMN</name>
        <dbReference type="ChEBI" id="CHEBI:58210"/>
    </ligand>
</feature>
<feature type="binding site" evidence="1">
    <location>
        <position position="82"/>
    </location>
    <ligand>
        <name>substrate</name>
    </ligand>
</feature>
<feature type="binding site" evidence="1">
    <location>
        <position position="102"/>
    </location>
    <ligand>
        <name>FMN</name>
        <dbReference type="ChEBI" id="CHEBI:58210"/>
    </ligand>
</feature>
<feature type="binding site" evidence="1">
    <location>
        <begin position="127"/>
        <end position="130"/>
    </location>
    <ligand>
        <name>substrate</name>
    </ligand>
</feature>
<feature type="binding site" evidence="1">
    <location>
        <position position="159"/>
    </location>
    <ligand>
        <name>FMN</name>
        <dbReference type="ChEBI" id="CHEBI:58210"/>
    </ligand>
</feature>
<feature type="binding site" evidence="1">
    <location>
        <position position="192"/>
    </location>
    <ligand>
        <name>FMN</name>
        <dbReference type="ChEBI" id="CHEBI:58210"/>
    </ligand>
</feature>
<feature type="binding site" evidence="1">
    <location>
        <position position="192"/>
    </location>
    <ligand>
        <name>substrate</name>
    </ligand>
</feature>
<feature type="binding site" evidence="1">
    <location>
        <position position="197"/>
    </location>
    <ligand>
        <name>substrate</name>
    </ligand>
</feature>
<feature type="binding site" evidence="1">
    <location>
        <position position="230"/>
    </location>
    <ligand>
        <name>FMN</name>
        <dbReference type="ChEBI" id="CHEBI:58210"/>
    </ligand>
</feature>
<feature type="binding site" evidence="1">
    <location>
        <position position="258"/>
    </location>
    <ligand>
        <name>FMN</name>
        <dbReference type="ChEBI" id="CHEBI:58210"/>
    </ligand>
</feature>
<feature type="binding site" evidence="1">
    <location>
        <begin position="259"/>
        <end position="260"/>
    </location>
    <ligand>
        <name>substrate</name>
    </ligand>
</feature>
<feature type="binding site" evidence="1">
    <location>
        <position position="288"/>
    </location>
    <ligand>
        <name>FMN</name>
        <dbReference type="ChEBI" id="CHEBI:58210"/>
    </ligand>
</feature>
<feature type="binding site" evidence="1">
    <location>
        <position position="317"/>
    </location>
    <ligand>
        <name>FMN</name>
        <dbReference type="ChEBI" id="CHEBI:58210"/>
    </ligand>
</feature>
<feature type="binding site" evidence="1">
    <location>
        <begin position="338"/>
        <end position="339"/>
    </location>
    <ligand>
        <name>FMN</name>
        <dbReference type="ChEBI" id="CHEBI:58210"/>
    </ligand>
</feature>
<gene>
    <name evidence="1" type="primary">pyrD</name>
    <name type="ordered locus">PCC8801_1870</name>
</gene>
<reference key="1">
    <citation type="journal article" date="2011" name="MBio">
        <title>Novel metabolic attributes of the genus Cyanothece, comprising a group of unicellular nitrogen-fixing Cyanobacteria.</title>
        <authorList>
            <person name="Bandyopadhyay A."/>
            <person name="Elvitigala T."/>
            <person name="Welsh E."/>
            <person name="Stockel J."/>
            <person name="Liberton M."/>
            <person name="Min H."/>
            <person name="Sherman L.A."/>
            <person name="Pakrasi H.B."/>
        </authorList>
    </citation>
    <scope>NUCLEOTIDE SEQUENCE [LARGE SCALE GENOMIC DNA]</scope>
    <source>
        <strain>PCC 8801 / RF-1</strain>
    </source>
</reference>
<comment type="function">
    <text evidence="1">Catalyzes the conversion of dihydroorotate to orotate with quinone as electron acceptor.</text>
</comment>
<comment type="catalytic activity">
    <reaction evidence="1">
        <text>(S)-dihydroorotate + a quinone = orotate + a quinol</text>
        <dbReference type="Rhea" id="RHEA:30187"/>
        <dbReference type="ChEBI" id="CHEBI:24646"/>
        <dbReference type="ChEBI" id="CHEBI:30839"/>
        <dbReference type="ChEBI" id="CHEBI:30864"/>
        <dbReference type="ChEBI" id="CHEBI:132124"/>
        <dbReference type="EC" id="1.3.5.2"/>
    </reaction>
</comment>
<comment type="cofactor">
    <cofactor evidence="1">
        <name>FMN</name>
        <dbReference type="ChEBI" id="CHEBI:58210"/>
    </cofactor>
    <text evidence="1">Binds 1 FMN per subunit.</text>
</comment>
<comment type="pathway">
    <text evidence="1">Pyrimidine metabolism; UMP biosynthesis via de novo pathway; orotate from (S)-dihydroorotate (quinone route): step 1/1.</text>
</comment>
<comment type="subunit">
    <text evidence="1">Monomer.</text>
</comment>
<comment type="subcellular location">
    <subcellularLocation>
        <location evidence="1">Cell membrane</location>
        <topology evidence="1">Peripheral membrane protein</topology>
    </subcellularLocation>
</comment>
<comment type="similarity">
    <text evidence="1">Belongs to the dihydroorotate dehydrogenase family. Type 2 subfamily.</text>
</comment>
<organism>
    <name type="scientific">Rippkaea orientalis (strain PCC 8801 / RF-1)</name>
    <name type="common">Cyanothece sp. (strain PCC 8801)</name>
    <dbReference type="NCBI Taxonomy" id="41431"/>
    <lineage>
        <taxon>Bacteria</taxon>
        <taxon>Bacillati</taxon>
        <taxon>Cyanobacteriota</taxon>
        <taxon>Cyanophyceae</taxon>
        <taxon>Oscillatoriophycideae</taxon>
        <taxon>Chroococcales</taxon>
        <taxon>Aphanothecaceae</taxon>
        <taxon>Rippkaea</taxon>
        <taxon>Rippkaea orientalis</taxon>
    </lineage>
</organism>
<name>PYRD_RIPO1</name>
<dbReference type="EC" id="1.3.5.2" evidence="1"/>
<dbReference type="EMBL" id="CP001287">
    <property type="protein sequence ID" value="ACK65912.1"/>
    <property type="molecule type" value="Genomic_DNA"/>
</dbReference>
<dbReference type="RefSeq" id="WP_012595184.1">
    <property type="nucleotide sequence ID" value="NC_011726.1"/>
</dbReference>
<dbReference type="SMR" id="B7JXU8"/>
<dbReference type="STRING" id="41431.PCC8801_1870"/>
<dbReference type="KEGG" id="cyp:PCC8801_1870"/>
<dbReference type="eggNOG" id="COG0167">
    <property type="taxonomic scope" value="Bacteria"/>
</dbReference>
<dbReference type="HOGENOM" id="CLU_013640_2_0_3"/>
<dbReference type="OrthoDB" id="9802377at2"/>
<dbReference type="UniPathway" id="UPA00070">
    <property type="reaction ID" value="UER00946"/>
</dbReference>
<dbReference type="Proteomes" id="UP000008204">
    <property type="component" value="Chromosome"/>
</dbReference>
<dbReference type="GO" id="GO:0005737">
    <property type="term" value="C:cytoplasm"/>
    <property type="evidence" value="ECO:0007669"/>
    <property type="project" value="InterPro"/>
</dbReference>
<dbReference type="GO" id="GO:0005886">
    <property type="term" value="C:plasma membrane"/>
    <property type="evidence" value="ECO:0007669"/>
    <property type="project" value="UniProtKB-SubCell"/>
</dbReference>
<dbReference type="GO" id="GO:0106430">
    <property type="term" value="F:dihydroorotate dehydrogenase (quinone) activity"/>
    <property type="evidence" value="ECO:0007669"/>
    <property type="project" value="UniProtKB-EC"/>
</dbReference>
<dbReference type="GO" id="GO:0006207">
    <property type="term" value="P:'de novo' pyrimidine nucleobase biosynthetic process"/>
    <property type="evidence" value="ECO:0007669"/>
    <property type="project" value="InterPro"/>
</dbReference>
<dbReference type="GO" id="GO:0044205">
    <property type="term" value="P:'de novo' UMP biosynthetic process"/>
    <property type="evidence" value="ECO:0007669"/>
    <property type="project" value="UniProtKB-UniRule"/>
</dbReference>
<dbReference type="CDD" id="cd04738">
    <property type="entry name" value="DHOD_2_like"/>
    <property type="match status" value="1"/>
</dbReference>
<dbReference type="Gene3D" id="3.20.20.70">
    <property type="entry name" value="Aldolase class I"/>
    <property type="match status" value="1"/>
</dbReference>
<dbReference type="HAMAP" id="MF_00225">
    <property type="entry name" value="DHO_dh_type2"/>
    <property type="match status" value="1"/>
</dbReference>
<dbReference type="InterPro" id="IPR013785">
    <property type="entry name" value="Aldolase_TIM"/>
</dbReference>
<dbReference type="InterPro" id="IPR050074">
    <property type="entry name" value="DHO_dehydrogenase"/>
</dbReference>
<dbReference type="InterPro" id="IPR005719">
    <property type="entry name" value="Dihydroorotate_DH_2"/>
</dbReference>
<dbReference type="InterPro" id="IPR005720">
    <property type="entry name" value="Dihydroorotate_DH_cat"/>
</dbReference>
<dbReference type="InterPro" id="IPR001295">
    <property type="entry name" value="Dihydroorotate_DH_CS"/>
</dbReference>
<dbReference type="NCBIfam" id="NF003651">
    <property type="entry name" value="PRK05286.2-4"/>
    <property type="match status" value="1"/>
</dbReference>
<dbReference type="NCBIfam" id="NF003652">
    <property type="entry name" value="PRK05286.2-5"/>
    <property type="match status" value="1"/>
</dbReference>
<dbReference type="NCBIfam" id="TIGR01036">
    <property type="entry name" value="pyrD_sub2"/>
    <property type="match status" value="1"/>
</dbReference>
<dbReference type="PANTHER" id="PTHR48109:SF4">
    <property type="entry name" value="DIHYDROOROTATE DEHYDROGENASE (QUINONE), MITOCHONDRIAL"/>
    <property type="match status" value="1"/>
</dbReference>
<dbReference type="PANTHER" id="PTHR48109">
    <property type="entry name" value="DIHYDROOROTATE DEHYDROGENASE (QUINONE), MITOCHONDRIAL-RELATED"/>
    <property type="match status" value="1"/>
</dbReference>
<dbReference type="Pfam" id="PF01180">
    <property type="entry name" value="DHO_dh"/>
    <property type="match status" value="1"/>
</dbReference>
<dbReference type="SUPFAM" id="SSF51395">
    <property type="entry name" value="FMN-linked oxidoreductases"/>
    <property type="match status" value="1"/>
</dbReference>
<dbReference type="PROSITE" id="PS00911">
    <property type="entry name" value="DHODEHASE_1"/>
    <property type="match status" value="1"/>
</dbReference>
<dbReference type="PROSITE" id="PS00912">
    <property type="entry name" value="DHODEHASE_2"/>
    <property type="match status" value="1"/>
</dbReference>
<evidence type="ECO:0000255" key="1">
    <source>
        <dbReference type="HAMAP-Rule" id="MF_00225"/>
    </source>
</evidence>
<proteinExistence type="inferred from homology"/>
<accession>B7JXU8</accession>
<sequence>MFNLLKPFYPLVLTAAKSNPEGAHLQLLNTLNTLERTHHTRGGNWLLSQLDQSFCVDDSRLKQTLWGLTFNNPVGLAAGCDKEGIAAGIWSHLGFGFAELGAVTLHPQPGNPRPRLFRLPHDKAVLNRLGANNQGAEIMAQTLAEIWQRSPRNIPIGINLCKSKITPLDEAAQDYVGSFSYLENQADYFVVNVSSPNTPGLRSLQEGEQLNSILQALQAANQHQKPLFVKISPDLEEEAILTIIELAQTHCLAGIIATNTTIKRDRLTTQILPETGNKIQEEAGGISGLPIRDRSTEIIGFIYQKTQGKLPIIGVGGIFTPDDAWNKIIAGASLLQLYTGWIYQGPWIIPDIVRGLGDKLKQLGLSHISQAVGINHK</sequence>
<protein>
    <recommendedName>
        <fullName evidence="1">Dihydroorotate dehydrogenase (quinone)</fullName>
        <ecNumber evidence="1">1.3.5.2</ecNumber>
    </recommendedName>
    <alternativeName>
        <fullName evidence="1">DHOdehase</fullName>
        <shortName evidence="1">DHOD</shortName>
        <shortName evidence="1">DHODase</shortName>
    </alternativeName>
    <alternativeName>
        <fullName evidence="1">Dihydroorotate oxidase</fullName>
    </alternativeName>
</protein>
<keyword id="KW-1003">Cell membrane</keyword>
<keyword id="KW-0285">Flavoprotein</keyword>
<keyword id="KW-0288">FMN</keyword>
<keyword id="KW-0472">Membrane</keyword>
<keyword id="KW-0560">Oxidoreductase</keyword>
<keyword id="KW-0665">Pyrimidine biosynthesis</keyword>
<keyword id="KW-1185">Reference proteome</keyword>